<organism>
    <name type="scientific">Escherichia coli (strain K12)</name>
    <dbReference type="NCBI Taxonomy" id="83333"/>
    <lineage>
        <taxon>Bacteria</taxon>
        <taxon>Pseudomonadati</taxon>
        <taxon>Pseudomonadota</taxon>
        <taxon>Gammaproteobacteria</taxon>
        <taxon>Enterobacterales</taxon>
        <taxon>Enterobacteriaceae</taxon>
        <taxon>Escherichia</taxon>
    </lineage>
</organism>
<protein>
    <recommendedName>
        <fullName>Inner membrane protein YebZ</fullName>
    </recommendedName>
</protein>
<keyword id="KW-0997">Cell inner membrane</keyword>
<keyword id="KW-1003">Cell membrane</keyword>
<keyword id="KW-0472">Membrane</keyword>
<keyword id="KW-1185">Reference proteome</keyword>
<keyword id="KW-0812">Transmembrane</keyword>
<keyword id="KW-1133">Transmembrane helix</keyword>
<accession>P76278</accession>
<accession>Q2MB12</accession>
<comment type="subcellular location">
    <subcellularLocation>
        <location>Cell inner membrane</location>
        <topology>Multi-pass membrane protein</topology>
    </subcellularLocation>
</comment>
<comment type="similarity">
    <text evidence="2">Belongs to the CopD family.</text>
</comment>
<name>YEBZ_ECOLI</name>
<dbReference type="EMBL" id="U00096">
    <property type="protein sequence ID" value="AAC74910.1"/>
    <property type="molecule type" value="Genomic_DNA"/>
</dbReference>
<dbReference type="EMBL" id="AP009048">
    <property type="protein sequence ID" value="BAE76544.1"/>
    <property type="molecule type" value="Genomic_DNA"/>
</dbReference>
<dbReference type="PIR" id="H64945">
    <property type="entry name" value="H64945"/>
</dbReference>
<dbReference type="RefSeq" id="NP_416354.1">
    <property type="nucleotide sequence ID" value="NC_000913.3"/>
</dbReference>
<dbReference type="BioGRID" id="4260359">
    <property type="interactions" value="8"/>
</dbReference>
<dbReference type="FunCoup" id="P76278">
    <property type="interactions" value="70"/>
</dbReference>
<dbReference type="STRING" id="511145.b1840"/>
<dbReference type="TCDB" id="9.B.62.1.4">
    <property type="family name" value="the copper resistance (copd) family"/>
</dbReference>
<dbReference type="PaxDb" id="511145-b1840"/>
<dbReference type="EnsemblBacteria" id="AAC74910">
    <property type="protein sequence ID" value="AAC74910"/>
    <property type="gene ID" value="b1840"/>
</dbReference>
<dbReference type="GeneID" id="947078"/>
<dbReference type="KEGG" id="ecj:JW1829"/>
<dbReference type="KEGG" id="eco:b1840"/>
<dbReference type="KEGG" id="ecoc:C3026_10485"/>
<dbReference type="PATRIC" id="fig|1411691.4.peg.410"/>
<dbReference type="EchoBASE" id="EB3782"/>
<dbReference type="eggNOG" id="COG1276">
    <property type="taxonomic scope" value="Bacteria"/>
</dbReference>
<dbReference type="HOGENOM" id="CLU_075540_1_0_6"/>
<dbReference type="InParanoid" id="P76278"/>
<dbReference type="OMA" id="TMMRFSR"/>
<dbReference type="OrthoDB" id="7032707at2"/>
<dbReference type="PhylomeDB" id="P76278"/>
<dbReference type="BioCyc" id="EcoCyc:G7013-MONOMER"/>
<dbReference type="PRO" id="PR:P76278"/>
<dbReference type="Proteomes" id="UP000000625">
    <property type="component" value="Chromosome"/>
</dbReference>
<dbReference type="GO" id="GO:0005886">
    <property type="term" value="C:plasma membrane"/>
    <property type="evidence" value="ECO:0000314"/>
    <property type="project" value="EcoCyc"/>
</dbReference>
<dbReference type="GO" id="GO:0006825">
    <property type="term" value="P:copper ion transport"/>
    <property type="evidence" value="ECO:0007669"/>
    <property type="project" value="InterPro"/>
</dbReference>
<dbReference type="InterPro" id="IPR032694">
    <property type="entry name" value="CopC/D"/>
</dbReference>
<dbReference type="InterPro" id="IPR047689">
    <property type="entry name" value="CopD"/>
</dbReference>
<dbReference type="InterPro" id="IPR008457">
    <property type="entry name" value="Cu-R_CopD_dom"/>
</dbReference>
<dbReference type="NCBIfam" id="NF033808">
    <property type="entry name" value="copper_CopD"/>
    <property type="match status" value="1"/>
</dbReference>
<dbReference type="PANTHER" id="PTHR34820">
    <property type="entry name" value="INNER MEMBRANE PROTEIN YEBZ"/>
    <property type="match status" value="1"/>
</dbReference>
<dbReference type="PANTHER" id="PTHR34820:SF4">
    <property type="entry name" value="INNER MEMBRANE PROTEIN YEBZ"/>
    <property type="match status" value="1"/>
</dbReference>
<dbReference type="Pfam" id="PF05425">
    <property type="entry name" value="CopD"/>
    <property type="match status" value="1"/>
</dbReference>
<proteinExistence type="evidence at protein level"/>
<sequence length="290" mass="32526">MLAFTWIALRFIHFTSLMLVFGFAMYGAWLAPLTIRRLLAKRFLRLQQHAAVWSLISATAMLAVQGGLMGTGWTDVFSPNIWQAVLQTQFGGIWLWQIVLALVTLIVALMQPRNMPRLLFMLTTAQFILLAGVGHATLNEGVTAKIHQTNHAIHLICAAAWFGGLLPVLWCMQLIKGRWRHQAIQALMRFSWCGHFAVIGVLASGVLNALLITGFPPTLTTYWGQLLLLKAILVMIMVVIALANRYVLVPRMRQDEDRAAPWFVWMTKLEWAIGAVVLVIISLLATLEPF</sequence>
<gene>
    <name type="primary">yebZ</name>
    <name type="ordered locus">b1840</name>
    <name type="ordered locus">JW1829</name>
</gene>
<evidence type="ECO:0000255" key="1"/>
<evidence type="ECO:0000305" key="2"/>
<reference key="1">
    <citation type="journal article" date="1997" name="Science">
        <title>The complete genome sequence of Escherichia coli K-12.</title>
        <authorList>
            <person name="Blattner F.R."/>
            <person name="Plunkett G. III"/>
            <person name="Bloch C.A."/>
            <person name="Perna N.T."/>
            <person name="Burland V."/>
            <person name="Riley M."/>
            <person name="Collado-Vides J."/>
            <person name="Glasner J.D."/>
            <person name="Rode C.K."/>
            <person name="Mayhew G.F."/>
            <person name="Gregor J."/>
            <person name="Davis N.W."/>
            <person name="Kirkpatrick H.A."/>
            <person name="Goeden M.A."/>
            <person name="Rose D.J."/>
            <person name="Mau B."/>
            <person name="Shao Y."/>
        </authorList>
    </citation>
    <scope>NUCLEOTIDE SEQUENCE [LARGE SCALE GENOMIC DNA]</scope>
    <source>
        <strain>K12 / MG1655 / ATCC 47076</strain>
    </source>
</reference>
<reference key="2">
    <citation type="journal article" date="2006" name="Mol. Syst. Biol.">
        <title>Highly accurate genome sequences of Escherichia coli K-12 strains MG1655 and W3110.</title>
        <authorList>
            <person name="Hayashi K."/>
            <person name="Morooka N."/>
            <person name="Yamamoto Y."/>
            <person name="Fujita K."/>
            <person name="Isono K."/>
            <person name="Choi S."/>
            <person name="Ohtsubo E."/>
            <person name="Baba T."/>
            <person name="Wanner B.L."/>
            <person name="Mori H."/>
            <person name="Horiuchi T."/>
        </authorList>
    </citation>
    <scope>NUCLEOTIDE SEQUENCE [LARGE SCALE GENOMIC DNA]</scope>
    <source>
        <strain>K12 / W3110 / ATCC 27325 / DSM 5911</strain>
    </source>
</reference>
<reference key="3">
    <citation type="journal article" date="2005" name="Science">
        <title>Global topology analysis of the Escherichia coli inner membrane proteome.</title>
        <authorList>
            <person name="Daley D.O."/>
            <person name="Rapp M."/>
            <person name="Granseth E."/>
            <person name="Melen K."/>
            <person name="Drew D."/>
            <person name="von Heijne G."/>
        </authorList>
    </citation>
    <scope>TOPOLOGY [LARGE SCALE ANALYSIS]</scope>
    <source>
        <strain>K12 / MG1655 / ATCC 47076</strain>
    </source>
</reference>
<feature type="chain" id="PRO_0000218127" description="Inner membrane protein YebZ">
    <location>
        <begin position="1"/>
        <end position="290"/>
    </location>
</feature>
<feature type="topological domain" description="Periplasmic" evidence="1">
    <location>
        <begin position="1"/>
        <end position="10"/>
    </location>
</feature>
<feature type="transmembrane region" description="Helical" evidence="1">
    <location>
        <begin position="11"/>
        <end position="31"/>
    </location>
</feature>
<feature type="topological domain" description="Cytoplasmic" evidence="1">
    <location>
        <begin position="32"/>
        <end position="49"/>
    </location>
</feature>
<feature type="transmembrane region" description="Helical" evidence="1">
    <location>
        <begin position="50"/>
        <end position="70"/>
    </location>
</feature>
<feature type="topological domain" description="Periplasmic" evidence="1">
    <location>
        <begin position="71"/>
        <end position="89"/>
    </location>
</feature>
<feature type="transmembrane region" description="Helical" evidence="1">
    <location>
        <begin position="90"/>
        <end position="110"/>
    </location>
</feature>
<feature type="topological domain" description="Cytoplasmic" evidence="1">
    <location>
        <begin position="111"/>
        <end position="117"/>
    </location>
</feature>
<feature type="transmembrane region" description="Helical" evidence="1">
    <location>
        <begin position="118"/>
        <end position="138"/>
    </location>
</feature>
<feature type="topological domain" description="Periplasmic" evidence="1">
    <location>
        <begin position="139"/>
        <end position="151"/>
    </location>
</feature>
<feature type="transmembrane region" description="Helical" evidence="1">
    <location>
        <begin position="152"/>
        <end position="172"/>
    </location>
</feature>
<feature type="topological domain" description="Cytoplasmic" evidence="1">
    <location>
        <begin position="173"/>
        <end position="195"/>
    </location>
</feature>
<feature type="transmembrane region" description="Helical" evidence="1">
    <location>
        <begin position="196"/>
        <end position="216"/>
    </location>
</feature>
<feature type="topological domain" description="Periplasmic" evidence="1">
    <location>
        <begin position="217"/>
        <end position="222"/>
    </location>
</feature>
<feature type="transmembrane region" description="Helical" evidence="1">
    <location>
        <begin position="223"/>
        <end position="243"/>
    </location>
</feature>
<feature type="topological domain" description="Cytoplasmic" evidence="1">
    <location>
        <begin position="244"/>
        <end position="260"/>
    </location>
</feature>
<feature type="transmembrane region" description="Helical" evidence="1">
    <location>
        <begin position="261"/>
        <end position="281"/>
    </location>
</feature>
<feature type="topological domain" description="Periplasmic" evidence="1">
    <location>
        <begin position="282"/>
        <end position="290"/>
    </location>
</feature>